<sequence length="92" mass="10677">MKMVYLGLFLIITSCVISSGNLIYECKWADSIRLKDKNPTHEFCKKKCEEKNTDRITVQHGFHSSDYRCTCQGEKILETPYQSDGVKDCHRI</sequence>
<proteinExistence type="evidence at protein level"/>
<comment type="function">
    <text evidence="1">Inhibits voltage-gated potassium channels (Kv) (IC(50)=about 10 nM), when tested on DRG neurons.</text>
</comment>
<comment type="subcellular location">
    <subcellularLocation>
        <location evidence="1">Secreted</location>
    </subcellularLocation>
</comment>
<comment type="tissue specificity">
    <text evidence="5">Expressed by the venom gland.</text>
</comment>
<comment type="PTM">
    <text evidence="4">Contains 3 disulfide bonds.</text>
</comment>
<comment type="mass spectrometry" mass="8556.2" method="MALDI" evidence="1"/>
<comment type="similarity">
    <text evidence="4">Belongs to the scoloptoxin-15 family.</text>
</comment>
<keyword id="KW-0903">Direct protein sequencing</keyword>
<keyword id="KW-1015">Disulfide bond</keyword>
<keyword id="KW-0872">Ion channel impairing toxin</keyword>
<keyword id="KW-0632">Potassium channel impairing toxin</keyword>
<keyword id="KW-0964">Secreted</keyword>
<keyword id="KW-0732">Signal</keyword>
<keyword id="KW-0800">Toxin</keyword>
<keyword id="KW-1220">Voltage-gated potassium channel impairing toxin</keyword>
<reference key="1">
    <citation type="journal article" date="2012" name="J. Proteome Res.">
        <title>Venomic and transcriptomic analysis of centipede Scolopendra subspinipes dehaani.</title>
        <authorList>
            <person name="Liu Z.C."/>
            <person name="Zhang R."/>
            <person name="Zhao F."/>
            <person name="Chen Z.M."/>
            <person name="Liu H.W."/>
            <person name="Wang Y.J."/>
            <person name="Jiang P."/>
            <person name="Zhang Y."/>
            <person name="Wu Y."/>
            <person name="Ding J.P."/>
            <person name="Lee W.H."/>
            <person name="Zhang Y."/>
        </authorList>
    </citation>
    <scope>NUCLEOTIDE SEQUENCE [MRNA]</scope>
    <scope>PROTEIN SEQUENCE OF 21-46</scope>
    <scope>SUBCELLULAR LOCATION</scope>
    <scope>MASS SPECTROMETRY</scope>
    <scope>FUNCTION</scope>
    <source>
        <tissue>Venom</tissue>
        <tissue>Venom gland</tissue>
    </source>
</reference>
<reference key="2">
    <citation type="journal article" date="2014" name="Mol. Biol. Evol.">
        <title>Clawing through evolution: toxin diversification and convergence in the ancient lineage Chilopoda (centipedes).</title>
        <authorList>
            <person name="Undheim E.A."/>
            <person name="Jones A."/>
            <person name="Clauser K.R."/>
            <person name="Holland J.W."/>
            <person name="Pineda S.S."/>
            <person name="King G.F."/>
            <person name="Fry B.G."/>
        </authorList>
    </citation>
    <scope>NOMENCLATURE</scope>
</reference>
<feature type="signal peptide" evidence="1">
    <location>
        <begin position="1"/>
        <end position="20"/>
    </location>
</feature>
<feature type="chain" id="PRO_0000446795" description="Kappa-scoloptoxin(15)-Ssd2a" evidence="4">
    <location>
        <begin position="21"/>
        <end position="92"/>
    </location>
</feature>
<evidence type="ECO:0000269" key="1">
    <source>
    </source>
</evidence>
<evidence type="ECO:0000303" key="2">
    <source>
    </source>
</evidence>
<evidence type="ECO:0000303" key="3">
    <source>
    </source>
</evidence>
<evidence type="ECO:0000305" key="4"/>
<evidence type="ECO:0000305" key="5">
    <source>
    </source>
</evidence>
<organism>
    <name type="scientific">Scolopendra dehaani</name>
    <name type="common">Thai centipede</name>
    <name type="synonym">Scolopendra subspinipes dehaani</name>
    <dbReference type="NCBI Taxonomy" id="2609776"/>
    <lineage>
        <taxon>Eukaryota</taxon>
        <taxon>Metazoa</taxon>
        <taxon>Ecdysozoa</taxon>
        <taxon>Arthropoda</taxon>
        <taxon>Myriapoda</taxon>
        <taxon>Chilopoda</taxon>
        <taxon>Pleurostigmophora</taxon>
        <taxon>Scolopendromorpha</taxon>
        <taxon>Scolopendridae</taxon>
        <taxon>Scolopendra</taxon>
    </lineage>
</organism>
<dbReference type="EMBL" id="KC144556">
    <property type="status" value="NOT_ANNOTATED_CDS"/>
    <property type="molecule type" value="mRNA"/>
</dbReference>
<dbReference type="SMR" id="P0DQC1"/>
<dbReference type="GO" id="GO:0005576">
    <property type="term" value="C:extracellular region"/>
    <property type="evidence" value="ECO:0007669"/>
    <property type="project" value="UniProtKB-SubCell"/>
</dbReference>
<dbReference type="GO" id="GO:0015459">
    <property type="term" value="F:potassium channel regulator activity"/>
    <property type="evidence" value="ECO:0007669"/>
    <property type="project" value="UniProtKB-KW"/>
</dbReference>
<dbReference type="GO" id="GO:0090729">
    <property type="term" value="F:toxin activity"/>
    <property type="evidence" value="ECO:0007669"/>
    <property type="project" value="UniProtKB-KW"/>
</dbReference>
<name>TXF2A_SCODE</name>
<accession>P0DQC1</accession>
<protein>
    <recommendedName>
        <fullName evidence="3 4">Kappa-scoloptoxin(15)-Ssd2a</fullName>
        <shortName evidence="3 4">Kappa-SLPTX(15)-Ssd2a</shortName>
    </recommendedName>
    <alternativeName>
        <fullName evidence="2">Toxin SSD559</fullName>
    </alternativeName>
</protein>